<dbReference type="EMBL" id="M31523">
    <property type="protein sequence ID" value="AAA61146.1"/>
    <property type="molecule type" value="mRNA"/>
</dbReference>
<dbReference type="EMBL" id="M31522">
    <property type="protein sequence ID" value="AAA36764.1"/>
    <property type="status" value="ALT_TERM"/>
    <property type="molecule type" value="mRNA"/>
</dbReference>
<dbReference type="EMBL" id="M31222">
    <property type="protein sequence ID" value="AAA52331.1"/>
    <property type="status" value="ALT_INIT"/>
    <property type="molecule type" value="mRNA"/>
</dbReference>
<dbReference type="EMBL" id="AC006274">
    <property type="protein sequence ID" value="AAC99797.1"/>
    <property type="molecule type" value="Genomic_DNA"/>
</dbReference>
<dbReference type="EMBL" id="AC005321">
    <property type="protein sequence ID" value="AAC27373.1"/>
    <property type="molecule type" value="Genomic_DNA"/>
</dbReference>
<dbReference type="EMBL" id="KC877695">
    <property type="status" value="NOT_ANNOTATED_CDS"/>
    <property type="molecule type" value="Genomic_DNA"/>
</dbReference>
<dbReference type="EMBL" id="BC110579">
    <property type="protein sequence ID" value="AAI10580.1"/>
    <property type="molecule type" value="mRNA"/>
</dbReference>
<dbReference type="EMBL" id="BC110580">
    <property type="protein sequence ID" value="AAI10581.1"/>
    <property type="molecule type" value="mRNA"/>
</dbReference>
<dbReference type="EMBL" id="M24404">
    <property type="protein sequence ID" value="AAA56829.1"/>
    <property type="molecule type" value="mRNA"/>
</dbReference>
<dbReference type="EMBL" id="M24405">
    <property type="protein sequence ID" value="AAA56830.1"/>
    <property type="molecule type" value="mRNA"/>
</dbReference>
<dbReference type="EMBL" id="X52078">
    <property type="protein sequence ID" value="CAA36297.1"/>
    <property type="molecule type" value="mRNA"/>
</dbReference>
<dbReference type="EMBL" id="M65214">
    <property type="protein sequence ID" value="AAC41693.1"/>
    <property type="molecule type" value="mRNA"/>
</dbReference>
<dbReference type="CCDS" id="CCDS12074.1">
    <molecule id="P15923-1"/>
</dbReference>
<dbReference type="CCDS" id="CCDS45899.1">
    <molecule id="P15923-2"/>
</dbReference>
<dbReference type="PIR" id="A34734">
    <property type="entry name" value="A34734"/>
</dbReference>
<dbReference type="PIR" id="S10099">
    <property type="entry name" value="S10099"/>
</dbReference>
<dbReference type="RefSeq" id="NP_001129611.1">
    <molecule id="P15923-2"/>
    <property type="nucleotide sequence ID" value="NM_001136139.4"/>
</dbReference>
<dbReference type="RefSeq" id="NP_001338708.1">
    <molecule id="P15923-2"/>
    <property type="nucleotide sequence ID" value="NM_001351779.2"/>
</dbReference>
<dbReference type="RefSeq" id="NP_003191.1">
    <molecule id="P15923-1"/>
    <property type="nucleotide sequence ID" value="NM_003200.5"/>
</dbReference>
<dbReference type="RefSeq" id="XP_016882669.1">
    <property type="nucleotide sequence ID" value="XM_017027180.1"/>
</dbReference>
<dbReference type="RefSeq" id="XP_016882670.1">
    <molecule id="P15923-1"/>
    <property type="nucleotide sequence ID" value="XM_017027181.2"/>
</dbReference>
<dbReference type="RefSeq" id="XP_016882671.1">
    <property type="nucleotide sequence ID" value="XM_017027182.1"/>
</dbReference>
<dbReference type="RefSeq" id="XP_047295219.1">
    <molecule id="P15923-1"/>
    <property type="nucleotide sequence ID" value="XM_047439263.1"/>
</dbReference>
<dbReference type="RefSeq" id="XP_047295220.1">
    <molecule id="P15923-1"/>
    <property type="nucleotide sequence ID" value="XM_047439264.1"/>
</dbReference>
<dbReference type="RefSeq" id="XP_047295221.1">
    <molecule id="P15923-1"/>
    <property type="nucleotide sequence ID" value="XM_047439265.1"/>
</dbReference>
<dbReference type="RefSeq" id="XP_047295224.1">
    <molecule id="P15923-2"/>
    <property type="nucleotide sequence ID" value="XM_047439268.1"/>
</dbReference>
<dbReference type="RefSeq" id="XP_047295225.1">
    <molecule id="P15923-2"/>
    <property type="nucleotide sequence ID" value="XM_047439269.1"/>
</dbReference>
<dbReference type="RefSeq" id="XP_047295232.1">
    <molecule id="P15923-1"/>
    <property type="nucleotide sequence ID" value="XM_047439276.1"/>
</dbReference>
<dbReference type="RefSeq" id="XP_047295233.1">
    <molecule id="P15923-1"/>
    <property type="nucleotide sequence ID" value="XM_047439277.1"/>
</dbReference>
<dbReference type="RefSeq" id="XP_047295234.1">
    <molecule id="P15923-1"/>
    <property type="nucleotide sequence ID" value="XM_047439278.1"/>
</dbReference>
<dbReference type="RefSeq" id="XP_047295237.1">
    <molecule id="P15923-2"/>
    <property type="nucleotide sequence ID" value="XM_047439281.1"/>
</dbReference>
<dbReference type="RefSeq" id="XP_047295238.1">
    <molecule id="P15923-2"/>
    <property type="nucleotide sequence ID" value="XM_047439282.1"/>
</dbReference>
<dbReference type="RefSeq" id="XP_047295239.1">
    <molecule id="P15923-2"/>
    <property type="nucleotide sequence ID" value="XM_047439283.1"/>
</dbReference>
<dbReference type="RefSeq" id="XP_047295240.1">
    <molecule id="P15923-2"/>
    <property type="nucleotide sequence ID" value="XM_047439284.1"/>
</dbReference>
<dbReference type="RefSeq" id="XP_054177837.1">
    <molecule id="P15923-1"/>
    <property type="nucleotide sequence ID" value="XM_054321862.1"/>
</dbReference>
<dbReference type="RefSeq" id="XP_054177838.1">
    <molecule id="P15923-1"/>
    <property type="nucleotide sequence ID" value="XM_054321863.1"/>
</dbReference>
<dbReference type="RefSeq" id="XP_054177839.1">
    <molecule id="P15923-1"/>
    <property type="nucleotide sequence ID" value="XM_054321864.1"/>
</dbReference>
<dbReference type="RefSeq" id="XP_054177840.1">
    <molecule id="P15923-1"/>
    <property type="nucleotide sequence ID" value="XM_054321865.1"/>
</dbReference>
<dbReference type="RefSeq" id="XP_054177841.1">
    <molecule id="P15923-1"/>
    <property type="nucleotide sequence ID" value="XM_054321866.1"/>
</dbReference>
<dbReference type="RefSeq" id="XP_054177842.1">
    <molecule id="P15923-1"/>
    <property type="nucleotide sequence ID" value="XM_054321867.1"/>
</dbReference>
<dbReference type="RefSeq" id="XP_054177843.1">
    <molecule id="P15923-1"/>
    <property type="nucleotide sequence ID" value="XM_054321868.1"/>
</dbReference>
<dbReference type="RefSeq" id="XP_054177847.1">
    <molecule id="P15923-2"/>
    <property type="nucleotide sequence ID" value="XM_054321872.1"/>
</dbReference>
<dbReference type="RefSeq" id="XP_054177848.1">
    <molecule id="P15923-2"/>
    <property type="nucleotide sequence ID" value="XM_054321873.1"/>
</dbReference>
<dbReference type="RefSeq" id="XP_054177849.1">
    <molecule id="P15923-2"/>
    <property type="nucleotide sequence ID" value="XM_054321874.1"/>
</dbReference>
<dbReference type="RefSeq" id="XP_054177850.1">
    <molecule id="P15923-2"/>
    <property type="nucleotide sequence ID" value="XM_054321875.1"/>
</dbReference>
<dbReference type="RefSeq" id="XP_054177851.1">
    <molecule id="P15923-2"/>
    <property type="nucleotide sequence ID" value="XM_054321876.1"/>
</dbReference>
<dbReference type="RefSeq" id="XP_054177852.1">
    <molecule id="P15923-2"/>
    <property type="nucleotide sequence ID" value="XM_054321877.1"/>
</dbReference>
<dbReference type="PDB" id="2MH0">
    <property type="method" value="NMR"/>
    <property type="chains" value="A=1-37"/>
</dbReference>
<dbReference type="PDB" id="2YPA">
    <property type="method" value="X-ray"/>
    <property type="resolution" value="2.80 A"/>
    <property type="chains" value="B=546-616"/>
</dbReference>
<dbReference type="PDB" id="2YPB">
    <property type="method" value="X-ray"/>
    <property type="resolution" value="2.87 A"/>
    <property type="chains" value="B=546-616"/>
</dbReference>
<dbReference type="PDB" id="3U5V">
    <property type="method" value="X-ray"/>
    <property type="resolution" value="1.70 A"/>
    <property type="chains" value="A=563-613"/>
</dbReference>
<dbReference type="PDB" id="6MGN">
    <property type="method" value="X-ray"/>
    <property type="resolution" value="1.90 A"/>
    <property type="chains" value="A=561-612"/>
</dbReference>
<dbReference type="PDBsum" id="2MH0"/>
<dbReference type="PDBsum" id="2YPA"/>
<dbReference type="PDBsum" id="2YPB"/>
<dbReference type="PDBsum" id="3U5V"/>
<dbReference type="PDBsum" id="6MGN"/>
<dbReference type="SMR" id="P15923"/>
<dbReference type="BioGRID" id="112791">
    <property type="interactions" value="226"/>
</dbReference>
<dbReference type="CORUM" id="P15923"/>
<dbReference type="DIP" id="DIP-74N"/>
<dbReference type="FunCoup" id="P15923">
    <property type="interactions" value="3247"/>
</dbReference>
<dbReference type="IntAct" id="P15923">
    <property type="interactions" value="63"/>
</dbReference>
<dbReference type="MINT" id="P15923"/>
<dbReference type="STRING" id="9606.ENSP00000262965"/>
<dbReference type="GlyGen" id="P15923">
    <property type="glycosylation" value="4 sites, 1 N-linked glycan (1 site), 1 O-linked glycan (3 sites)"/>
</dbReference>
<dbReference type="iPTMnet" id="P15923"/>
<dbReference type="PhosphoSitePlus" id="P15923"/>
<dbReference type="BioMuta" id="TCF3"/>
<dbReference type="DMDM" id="135655"/>
<dbReference type="jPOST" id="P15923"/>
<dbReference type="MassIVE" id="P15923"/>
<dbReference type="PaxDb" id="9606-ENSP00000262965"/>
<dbReference type="PeptideAtlas" id="P15923"/>
<dbReference type="ProteomicsDB" id="53242">
    <molecule id="P15923-1"/>
</dbReference>
<dbReference type="ProteomicsDB" id="53243">
    <molecule id="P15923-2"/>
</dbReference>
<dbReference type="ProteomicsDB" id="61481"/>
<dbReference type="Pumba" id="P15923"/>
<dbReference type="Antibodypedia" id="4332">
    <property type="antibodies" value="584 antibodies from 45 providers"/>
</dbReference>
<dbReference type="DNASU" id="6929"/>
<dbReference type="Ensembl" id="ENST00000262965.12">
    <molecule id="P15923-1"/>
    <property type="protein sequence ID" value="ENSP00000262965.5"/>
    <property type="gene ID" value="ENSG00000071564.19"/>
</dbReference>
<dbReference type="Ensembl" id="ENST00000395423.7">
    <molecule id="P15923-3"/>
    <property type="protein sequence ID" value="ENSP00000378813.3"/>
    <property type="gene ID" value="ENSG00000071564.19"/>
</dbReference>
<dbReference type="Ensembl" id="ENST00000588136.7">
    <molecule id="P15923-2"/>
    <property type="protein sequence ID" value="ENSP00000468487.1"/>
    <property type="gene ID" value="ENSG00000071564.19"/>
</dbReference>
<dbReference type="GeneID" id="6929"/>
<dbReference type="KEGG" id="hsa:6929"/>
<dbReference type="MANE-Select" id="ENST00000262965.12">
    <property type="protein sequence ID" value="ENSP00000262965.5"/>
    <property type="RefSeq nucleotide sequence ID" value="NM_003200.5"/>
    <property type="RefSeq protein sequence ID" value="NP_003191.1"/>
</dbReference>
<dbReference type="UCSC" id="uc002ltr.3">
    <molecule id="P15923-1"/>
    <property type="organism name" value="human"/>
</dbReference>
<dbReference type="AGR" id="HGNC:11633"/>
<dbReference type="CTD" id="6929"/>
<dbReference type="DisGeNET" id="6929"/>
<dbReference type="GeneCards" id="TCF3"/>
<dbReference type="HGNC" id="HGNC:11633">
    <property type="gene designation" value="TCF3"/>
</dbReference>
<dbReference type="HPA" id="ENSG00000071564">
    <property type="expression patterns" value="Low tissue specificity"/>
</dbReference>
<dbReference type="MalaCards" id="TCF3"/>
<dbReference type="MIM" id="147141">
    <property type="type" value="gene"/>
</dbReference>
<dbReference type="MIM" id="616941">
    <property type="type" value="phenotype"/>
</dbReference>
<dbReference type="MIM" id="619824">
    <property type="type" value="phenotype"/>
</dbReference>
<dbReference type="neXtProt" id="NX_P15923"/>
<dbReference type="OpenTargets" id="ENSG00000071564"/>
<dbReference type="Orphanet" id="33110">
    <property type="disease" value="Autosomal non-syndromic agammaglobulinemia"/>
</dbReference>
<dbReference type="Orphanet" id="641375">
    <property type="disease" value="B-lymphoblastic leukemia/lymphoma with t(17;19)"/>
</dbReference>
<dbReference type="Orphanet" id="585956">
    <property type="disease" value="B-lymphoblastic leukemia/lymphoma with t(1;19)(q23;p13.3)"/>
</dbReference>
<dbReference type="PharmGKB" id="PA164742580"/>
<dbReference type="VEuPathDB" id="HostDB:ENSG00000071564"/>
<dbReference type="eggNOG" id="KOG3910">
    <property type="taxonomic scope" value="Eukaryota"/>
</dbReference>
<dbReference type="GeneTree" id="ENSGT00940000157036"/>
<dbReference type="HOGENOM" id="CLU_021099_2_1_1"/>
<dbReference type="InParanoid" id="P15923"/>
<dbReference type="OMA" id="FPQPHCL"/>
<dbReference type="OrthoDB" id="10034090at2759"/>
<dbReference type="PAN-GO" id="P15923">
    <property type="GO annotations" value="5 GO annotations based on evolutionary models"/>
</dbReference>
<dbReference type="PhylomeDB" id="P15923"/>
<dbReference type="TreeFam" id="TF321672"/>
<dbReference type="PathwayCommons" id="P15923"/>
<dbReference type="Reactome" id="R-HSA-525793">
    <property type="pathway name" value="Myogenesis"/>
</dbReference>
<dbReference type="Reactome" id="R-HSA-8939236">
    <property type="pathway name" value="RUNX1 regulates transcription of genes involved in differentiation of HSCs"/>
</dbReference>
<dbReference type="Reactome" id="R-HSA-9839394">
    <property type="pathway name" value="TGFBR3 expression"/>
</dbReference>
<dbReference type="SignaLink" id="P15923"/>
<dbReference type="SIGNOR" id="P15923"/>
<dbReference type="BioGRID-ORCS" id="6929">
    <property type="hits" value="54 hits in 1182 CRISPR screens"/>
</dbReference>
<dbReference type="ChiTaRS" id="TCF3">
    <property type="organism name" value="human"/>
</dbReference>
<dbReference type="EvolutionaryTrace" id="P15923"/>
<dbReference type="GeneWiki" id="TCF3"/>
<dbReference type="GenomeRNAi" id="6929"/>
<dbReference type="Pharos" id="P15923">
    <property type="development level" value="Tbio"/>
</dbReference>
<dbReference type="PRO" id="PR:P15923"/>
<dbReference type="Proteomes" id="UP000005640">
    <property type="component" value="Chromosome 19"/>
</dbReference>
<dbReference type="RNAct" id="P15923">
    <property type="molecule type" value="protein"/>
</dbReference>
<dbReference type="Bgee" id="ENSG00000071564">
    <property type="expression patterns" value="Expressed in ganglionic eminence and 207 other cell types or tissues"/>
</dbReference>
<dbReference type="ExpressionAtlas" id="P15923">
    <property type="expression patterns" value="baseline and differential"/>
</dbReference>
<dbReference type="GO" id="GO:0000785">
    <property type="term" value="C:chromatin"/>
    <property type="evidence" value="ECO:0000314"/>
    <property type="project" value="BHF-UCL"/>
</dbReference>
<dbReference type="GO" id="GO:0005737">
    <property type="term" value="C:cytoplasm"/>
    <property type="evidence" value="ECO:0000314"/>
    <property type="project" value="BHF-UCL"/>
</dbReference>
<dbReference type="GO" id="GO:0000791">
    <property type="term" value="C:euchromatin"/>
    <property type="evidence" value="ECO:0000314"/>
    <property type="project" value="ARUK-UCL"/>
</dbReference>
<dbReference type="GO" id="GO:0005654">
    <property type="term" value="C:nucleoplasm"/>
    <property type="evidence" value="ECO:0000314"/>
    <property type="project" value="HPA"/>
</dbReference>
<dbReference type="GO" id="GO:0005634">
    <property type="term" value="C:nucleus"/>
    <property type="evidence" value="ECO:0000314"/>
    <property type="project" value="BHF-UCL"/>
</dbReference>
<dbReference type="GO" id="GO:0032991">
    <property type="term" value="C:protein-containing complex"/>
    <property type="evidence" value="ECO:0000314"/>
    <property type="project" value="UniProtKB"/>
</dbReference>
<dbReference type="GO" id="GO:0090575">
    <property type="term" value="C:RNA polymerase II transcription regulator complex"/>
    <property type="evidence" value="ECO:0000314"/>
    <property type="project" value="BHF-UCL"/>
</dbReference>
<dbReference type="GO" id="GO:0005667">
    <property type="term" value="C:transcription regulator complex"/>
    <property type="evidence" value="ECO:0000314"/>
    <property type="project" value="UniProtKB"/>
</dbReference>
<dbReference type="GO" id="GO:0043425">
    <property type="term" value="F:bHLH transcription factor binding"/>
    <property type="evidence" value="ECO:0000353"/>
    <property type="project" value="BHF-UCL"/>
</dbReference>
<dbReference type="GO" id="GO:0000987">
    <property type="term" value="F:cis-regulatory region sequence-specific DNA binding"/>
    <property type="evidence" value="ECO:0000305"/>
    <property type="project" value="BHF-UCL"/>
</dbReference>
<dbReference type="GO" id="GO:0003677">
    <property type="term" value="F:DNA binding"/>
    <property type="evidence" value="ECO:0000314"/>
    <property type="project" value="UniProtKB"/>
</dbReference>
<dbReference type="GO" id="GO:0001228">
    <property type="term" value="F:DNA-binding transcription activator activity, RNA polymerase II-specific"/>
    <property type="evidence" value="ECO:0000314"/>
    <property type="project" value="BHF-UCL"/>
</dbReference>
<dbReference type="GO" id="GO:0003700">
    <property type="term" value="F:DNA-binding transcription factor activity"/>
    <property type="evidence" value="ECO:0000314"/>
    <property type="project" value="UniProtKB"/>
</dbReference>
<dbReference type="GO" id="GO:0000981">
    <property type="term" value="F:DNA-binding transcription factor activity, RNA polymerase II-specific"/>
    <property type="evidence" value="ECO:0000247"/>
    <property type="project" value="NTNU_SB"/>
</dbReference>
<dbReference type="GO" id="GO:0140297">
    <property type="term" value="F:DNA-binding transcription factor binding"/>
    <property type="evidence" value="ECO:0000353"/>
    <property type="project" value="UniProtKB"/>
</dbReference>
<dbReference type="GO" id="GO:0001227">
    <property type="term" value="F:DNA-binding transcription repressor activity, RNA polymerase II-specific"/>
    <property type="evidence" value="ECO:0000314"/>
    <property type="project" value="NTNU_SB"/>
</dbReference>
<dbReference type="GO" id="GO:0070888">
    <property type="term" value="F:E-box binding"/>
    <property type="evidence" value="ECO:0000314"/>
    <property type="project" value="UniProtKB"/>
</dbReference>
<dbReference type="GO" id="GO:0031435">
    <property type="term" value="F:mitogen-activated protein kinase kinase kinase binding"/>
    <property type="evidence" value="ECO:0000353"/>
    <property type="project" value="UniProtKB"/>
</dbReference>
<dbReference type="GO" id="GO:0046982">
    <property type="term" value="F:protein heterodimerization activity"/>
    <property type="evidence" value="ECO:0000314"/>
    <property type="project" value="UniProtKB"/>
</dbReference>
<dbReference type="GO" id="GO:0042803">
    <property type="term" value="F:protein homodimerization activity"/>
    <property type="evidence" value="ECO:0000314"/>
    <property type="project" value="UniProtKB"/>
</dbReference>
<dbReference type="GO" id="GO:0000978">
    <property type="term" value="F:RNA polymerase II cis-regulatory region sequence-specific DNA binding"/>
    <property type="evidence" value="ECO:0000314"/>
    <property type="project" value="NTNU_SB"/>
</dbReference>
<dbReference type="GO" id="GO:0061629">
    <property type="term" value="F:RNA polymerase II-specific DNA-binding transcription factor binding"/>
    <property type="evidence" value="ECO:0000353"/>
    <property type="project" value="ARUK-UCL"/>
</dbReference>
<dbReference type="GO" id="GO:0070644">
    <property type="term" value="F:vitamin D response element binding"/>
    <property type="evidence" value="ECO:0000314"/>
    <property type="project" value="BHF-UCL"/>
</dbReference>
<dbReference type="GO" id="GO:0030183">
    <property type="term" value="P:B cell differentiation"/>
    <property type="evidence" value="ECO:0000303"/>
    <property type="project" value="UniProtKB"/>
</dbReference>
<dbReference type="GO" id="GO:0002326">
    <property type="term" value="P:B cell lineage commitment"/>
    <property type="evidence" value="ECO:0000314"/>
    <property type="project" value="UniProtKB"/>
</dbReference>
<dbReference type="GO" id="GO:0033152">
    <property type="term" value="P:immunoglobulin V(D)J recombination"/>
    <property type="evidence" value="ECO:0000314"/>
    <property type="project" value="MGI"/>
</dbReference>
<dbReference type="GO" id="GO:0000122">
    <property type="term" value="P:negative regulation of transcription by RNA polymerase II"/>
    <property type="evidence" value="ECO:0000314"/>
    <property type="project" value="NTNU_SB"/>
</dbReference>
<dbReference type="GO" id="GO:0007399">
    <property type="term" value="P:nervous system development"/>
    <property type="evidence" value="ECO:0007669"/>
    <property type="project" value="UniProtKB-KW"/>
</dbReference>
<dbReference type="GO" id="GO:0030890">
    <property type="term" value="P:positive regulation of B cell proliferation"/>
    <property type="evidence" value="ECO:0000315"/>
    <property type="project" value="UniProtKB"/>
</dbReference>
<dbReference type="GO" id="GO:0045787">
    <property type="term" value="P:positive regulation of cell cycle"/>
    <property type="evidence" value="ECO:0000314"/>
    <property type="project" value="UniProtKB"/>
</dbReference>
<dbReference type="GO" id="GO:0051091">
    <property type="term" value="P:positive regulation of DNA-binding transcription factor activity"/>
    <property type="evidence" value="ECO:0000314"/>
    <property type="project" value="UniProtKB"/>
</dbReference>
<dbReference type="GO" id="GO:0045893">
    <property type="term" value="P:positive regulation of DNA-templated transcription"/>
    <property type="evidence" value="ECO:0000314"/>
    <property type="project" value="UniProtKB"/>
</dbReference>
<dbReference type="GO" id="GO:0045666">
    <property type="term" value="P:positive regulation of neuron differentiation"/>
    <property type="evidence" value="ECO:0000250"/>
    <property type="project" value="UniProtKB"/>
</dbReference>
<dbReference type="GO" id="GO:0045944">
    <property type="term" value="P:positive regulation of transcription by RNA polymerase II"/>
    <property type="evidence" value="ECO:0000314"/>
    <property type="project" value="BHF-UCL"/>
</dbReference>
<dbReference type="GO" id="GO:0006355">
    <property type="term" value="P:regulation of DNA-templated transcription"/>
    <property type="evidence" value="ECO:0000303"/>
    <property type="project" value="UniProtKB"/>
</dbReference>
<dbReference type="GO" id="GO:2000045">
    <property type="term" value="P:regulation of G1/S transition of mitotic cell cycle"/>
    <property type="evidence" value="ECO:0000314"/>
    <property type="project" value="UniProtKB"/>
</dbReference>
<dbReference type="GO" id="GO:0006357">
    <property type="term" value="P:regulation of transcription by RNA polymerase II"/>
    <property type="evidence" value="ECO:0000318"/>
    <property type="project" value="GO_Central"/>
</dbReference>
<dbReference type="CDD" id="cd18945">
    <property type="entry name" value="bHLH_E-protein_TCF4_E2-2"/>
    <property type="match status" value="1"/>
</dbReference>
<dbReference type="FunFam" id="4.10.280.10:FF:000001">
    <property type="entry name" value="Putative transcription factor 12"/>
    <property type="match status" value="1"/>
</dbReference>
<dbReference type="Gene3D" id="4.10.280.10">
    <property type="entry name" value="Helix-loop-helix DNA-binding domain"/>
    <property type="match status" value="1"/>
</dbReference>
<dbReference type="IDEAL" id="IID00541"/>
<dbReference type="InterPro" id="IPR011598">
    <property type="entry name" value="bHLH_dom"/>
</dbReference>
<dbReference type="InterPro" id="IPR036638">
    <property type="entry name" value="HLH_DNA-bd_sf"/>
</dbReference>
<dbReference type="InterPro" id="IPR051098">
    <property type="entry name" value="NeuroDiff_E-box_TFs"/>
</dbReference>
<dbReference type="PANTHER" id="PTHR11793">
    <property type="entry name" value="BASIC HELIX-LOOP-HELIX TRANSCRIPTION FACTOR"/>
    <property type="match status" value="1"/>
</dbReference>
<dbReference type="PANTHER" id="PTHR11793:SF7">
    <property type="entry name" value="TRANSCRIPTION FACTOR E2-ALPHA"/>
    <property type="match status" value="1"/>
</dbReference>
<dbReference type="Pfam" id="PF00010">
    <property type="entry name" value="HLH"/>
    <property type="match status" value="1"/>
</dbReference>
<dbReference type="SMART" id="SM00353">
    <property type="entry name" value="HLH"/>
    <property type="match status" value="1"/>
</dbReference>
<dbReference type="SUPFAM" id="SSF47459">
    <property type="entry name" value="HLH, helix-loop-helix DNA-binding domain"/>
    <property type="match status" value="1"/>
</dbReference>
<dbReference type="PROSITE" id="PS50888">
    <property type="entry name" value="BHLH"/>
    <property type="match status" value="1"/>
</dbReference>
<comment type="function">
    <text evidence="2 17">Transcriptional regulator involved in the initiation of neuronal differentiation and mesenchymal to epithelial transition (By similarity). Heterodimers between TCF3 and tissue-specific basic helix-loop-helix (bHLH) proteins play major roles in determining tissue-specific cell fate during embryogenesis, like muscle or early B-cell differentiation (By similarity). Together with TCF15, required for the mesenchymal to epithelial transition (By similarity). Dimers bind DNA on E-box motifs: 5'-CANNTG-3' (By similarity). Binds to the kappa-E2 site in the kappa immunoglobulin gene enhancer (PubMed:2493990). Binds to IEB1 and IEB2, which are short DNA sequences in the insulin gene transcription control region (By similarity).</text>
</comment>
<comment type="function">
    <molecule>Isoform E47</molecule>
    <text evidence="21">Facilitates ATOH7 binding to DNA at the consensus sequence 5'-CAGGTG-3', and positively regulates transcriptional activity.</text>
</comment>
<comment type="subunit">
    <text evidence="2 8 14 15 18 22">Homodimer (PubMed:14752053, PubMed:2112746). Heterodimer; efficient DNA binding requires dimerization with another bHLH protein (By similarity). Forms a heterodimer with ASH1, TWIST1 and TWIST2 (By similarity). Forms a heterodimer with MYOG; heterodimerization enhances MYOG DNA-binding and transcriptional activities (By similarity). Forms a heterodimer with NEUROD1; the heterodimer is inhibited in presence of ID2, but not NR0B2, to E-box element (PubMed:14752053). Forms a heterodimer with TCF15; the heterodimer binds E-box element (By similarity). Forms a heterodimer with ATOH8; repress transcription of TCF3 and TCF3/NEUROG3 dimer-induced transactivation of E box-dependent promoters (By similarity). Component of a nuclear TAL-1 complex composed at least of CBFA2T3, LDB1, TAL1 and TCF3 (By similarity). Interacts with NEUROD2, PTF1A and TGFB1I1 (By similarity). Interacts with EP300 and UBE2I (PubMed:14752053, PubMed:9409784). Interacts with BHLHA9 (PubMed:25466284). Interacts with ASB2; the interaction is mediated by SKP2 and targets TCF3 for Notch-induced proteasomal degradation (PubMed:21119685).</text>
</comment>
<comment type="subunit">
    <molecule>Isoform E47</molecule>
    <text evidence="21">Forms a heterodimer with ATOH7; required for ATOH7 DNA-binding.</text>
</comment>
<comment type="subunit">
    <molecule>Isoform E12</molecule>
    <text evidence="9">Interacts with RALGAPA1 and FIGLA.</text>
</comment>
<comment type="interaction">
    <interactant intactId="EBI-769630">
        <id>P15923</id>
    </interactant>
    <interactant intactId="EBI-957042">
        <id>P50553</id>
        <label>ASCL1</label>
    </interactant>
    <organismsDiffer>false</organismsDiffer>
    <experiments>4</experiments>
</comment>
<comment type="interaction">
    <interactant intactId="EBI-769630">
        <id>P15923</id>
    </interactant>
    <interactant intactId="EBI-1759806">
        <id>O75593</id>
        <label>FOXH1</label>
    </interactant>
    <organismsDiffer>false</organismsDiffer>
    <experiments>2</experiments>
</comment>
<comment type="interaction">
    <interactant intactId="EBI-769630">
        <id>P15923</id>
    </interactant>
    <interactant intactId="EBI-713450">
        <id>Q02363</id>
        <label>ID2</label>
    </interactant>
    <organismsDiffer>false</organismsDiffer>
    <experiments>2</experiments>
</comment>
<comment type="interaction">
    <interactant intactId="EBI-769630">
        <id>P15923</id>
    </interactant>
    <interactant intactId="EBI-1387094">
        <id>Q02535</id>
        <label>ID3</label>
    </interactant>
    <organismsDiffer>false</organismsDiffer>
    <experiments>3</experiments>
</comment>
<comment type="interaction">
    <interactant intactId="EBI-769630">
        <id>P15923</id>
    </interactant>
    <interactant intactId="EBI-1753878">
        <id>P17542</id>
        <label>TAL1</label>
    </interactant>
    <organismsDiffer>false</organismsDiffer>
    <experiments>10</experiments>
</comment>
<comment type="interaction">
    <interactant intactId="EBI-769630">
        <id>P15923</id>
    </interactant>
    <interactant intactId="EBI-750484">
        <id>Q9Y4C2</id>
        <label>TCAF1</label>
    </interactant>
    <organismsDiffer>false</organismsDiffer>
    <experiments>3</experiments>
</comment>
<comment type="interaction">
    <interactant intactId="EBI-769645">
        <id>P15923-1</id>
    </interactant>
    <interactant intactId="EBI-748961">
        <id>O95273</id>
        <label>CCNDBP1</label>
    </interactant>
    <organismsDiffer>false</organismsDiffer>
    <experiments>3</experiments>
</comment>
<comment type="interaction">
    <interactant intactId="EBI-769645">
        <id>P15923-1</id>
    </interactant>
    <interactant intactId="EBI-713450">
        <id>Q02363</id>
        <label>ID2</label>
    </interactant>
    <organismsDiffer>false</organismsDiffer>
    <experiments>3</experiments>
</comment>
<comment type="interaction">
    <interactant intactId="EBI-769645">
        <id>P15923-1</id>
    </interactant>
    <interactant intactId="EBI-488878">
        <id>P15172</id>
        <label>MYOD1</label>
    </interactant>
    <organismsDiffer>false</organismsDiffer>
    <experiments>2</experiments>
</comment>
<comment type="interaction">
    <interactant intactId="EBI-769645">
        <id>P15923-1</id>
    </interactant>
    <interactant intactId="EBI-750973">
        <id>O00233</id>
        <label>PSMD9</label>
    </interactant>
    <organismsDiffer>false</organismsDiffer>
    <experiments>2</experiments>
</comment>
<comment type="interaction">
    <interactant intactId="EBI-769645">
        <id>P15923-1</id>
    </interactant>
    <interactant intactId="EBI-1797287">
        <id>Q15672</id>
        <label>TWIST1</label>
    </interactant>
    <organismsDiffer>false</organismsDiffer>
    <experiments>6</experiments>
</comment>
<comment type="interaction">
    <interactant intactId="EBI-12000326">
        <id>P15923-3</id>
    </interactant>
    <interactant intactId="EBI-12108222">
        <id>Q9NQ33</id>
        <label>ASCL3</label>
    </interactant>
    <organismsDiffer>false</organismsDiffer>
    <experiments>3</experiments>
</comment>
<comment type="interaction">
    <interactant intactId="EBI-12000326">
        <id>P15923-3</id>
    </interactant>
    <interactant intactId="EBI-948169">
        <id>P13637</id>
        <label>ATP1A3</label>
    </interactant>
    <organismsDiffer>false</organismsDiffer>
    <experiments>3</experiments>
</comment>
<comment type="interaction">
    <interactant intactId="EBI-12000326">
        <id>P15923-3</id>
    </interactant>
    <interactant intactId="EBI-11320290">
        <id>O96004</id>
        <label>HAND1</label>
    </interactant>
    <organismsDiffer>false</organismsDiffer>
    <experiments>3</experiments>
</comment>
<comment type="interaction">
    <interactant intactId="EBI-12000326">
        <id>P15923-3</id>
    </interactant>
    <interactant intactId="EBI-1215527">
        <id>P41134</id>
        <label>ID1</label>
    </interactant>
    <organismsDiffer>false</organismsDiffer>
    <experiments>3</experiments>
</comment>
<comment type="interaction">
    <interactant intactId="EBI-12000326">
        <id>P15923-3</id>
    </interactant>
    <interactant intactId="EBI-1387094">
        <id>Q02535</id>
        <label>ID3</label>
    </interactant>
    <organismsDiffer>false</organismsDiffer>
    <experiments>3</experiments>
</comment>
<comment type="interaction">
    <interactant intactId="EBI-12000326">
        <id>P15923-3</id>
    </interactant>
    <interactant intactId="EBI-716404">
        <id>P16284</id>
        <label>PECAM1</label>
    </interactant>
    <organismsDiffer>false</organismsDiffer>
    <experiments>3</experiments>
</comment>
<comment type="interaction">
    <interactant intactId="EBI-12000326">
        <id>P15923-3</id>
    </interactant>
    <interactant intactId="EBI-2827556">
        <id>Q13393</id>
        <label>PLD1</label>
    </interactant>
    <organismsDiffer>false</organismsDiffer>
    <experiments>3</experiments>
</comment>
<comment type="interaction">
    <interactant intactId="EBI-12000326">
        <id>P15923-3</id>
    </interactant>
    <interactant intactId="EBI-399437">
        <id>P20339</id>
        <label>RAB5A</label>
    </interactant>
    <organismsDiffer>false</organismsDiffer>
    <experiments>3</experiments>
</comment>
<comment type="interaction">
    <interactant intactId="EBI-12000326">
        <id>P15923-3</id>
    </interactant>
    <interactant intactId="EBI-11974855">
        <id>Q9Y4C2-2</id>
        <label>TCAF1</label>
    </interactant>
    <organismsDiffer>false</organismsDiffer>
    <experiments>3</experiments>
</comment>
<comment type="interaction">
    <interactant intactId="EBI-12000326">
        <id>P15923-3</id>
    </interactant>
    <interactant intactId="EBI-1797313">
        <id>Q8WVJ9</id>
        <label>TWIST2</label>
    </interactant>
    <organismsDiffer>false</organismsDiffer>
    <experiments>3</experiments>
</comment>
<comment type="interaction">
    <interactant intactId="EBI-12000326">
        <id>P15923-3</id>
    </interactant>
    <interactant intactId="EBI-353844">
        <id>P08670</id>
        <label>VIM</label>
    </interactant>
    <organismsDiffer>false</organismsDiffer>
    <experiments>3</experiments>
</comment>
<comment type="subcellular location">
    <subcellularLocation>
        <location evidence="21">Nucleus</location>
    </subcellularLocation>
</comment>
<comment type="alternative products">
    <event type="alternative splicing"/>
    <isoform>
        <id>P15923-1</id>
        <name>E12</name>
        <name>PAN-2</name>
        <sequence type="displayed"/>
    </isoform>
    <isoform>
        <id>P15923-2</id>
        <name>E47</name>
        <name>PAN-1</name>
        <sequence type="described" ref="VSP_002155"/>
    </isoform>
    <isoform>
        <id>P15923-3</id>
        <name>3</name>
        <sequence type="described" ref="VSP_057277 VSP_057278"/>
    </isoform>
</comment>
<comment type="domain">
    <text evidence="12 17">The 9aaTAD motif is a transactivation domain present in a large number of yeast and animal transcription factors.</text>
</comment>
<comment type="PTM">
    <text evidence="1">Phosphorylated following NGF stimulation.</text>
</comment>
<comment type="PTM">
    <text evidence="14">Undergoes Notch-induced ubiquitination and subsequent proteasomal degradation which is mediated by ASB1 or ASB2, the substrate-recognition components of probable ECS E3 ubiquitin-protein ligase complexes.</text>
</comment>
<comment type="disease">
    <text evidence="6 7 10 13">Chromosomal aberrations involving TCF3 are cause of forms of pre-B-cell acute lymphoblastic leukemia (B-ALL). Translocation t(1;19)(q23;p13.3) with PBX1. TCF3-PBX1 transforms cells by constitutively activating transcription of genes regulated by PBX1 or by other members of the PBX protein family (PubMed:1671560, PubMed:1967983). Translocation t(17;19)(q22;p13.3) with HLF (PubMed:1386162). Inversion inv(19)(p13;q13) with TFPT (PubMed:10086727).</text>
</comment>
<comment type="disease" evidence="16">
    <disease id="DI-04717">
        <name>Agammaglobulinemia 8A, autosomal dominant</name>
        <acronym>AGM8A</acronym>
        <description>A form of agammaglobulinemia, a primary immunodeficiency characterized by profoundly low or absent serum antibodies and low or absent circulating B-cells due to an early block of B-cell development. Affected individuals develop severe infections in the first years of life.</description>
        <dbReference type="MIM" id="616941"/>
    </disease>
    <text>The disease is caused by variants affecting the gene represented in this entry.</text>
</comment>
<comment type="disease" evidence="19 20">
    <disease id="DI-06388">
        <name>Agammaglobulinemia 8B, autosomal recessive</name>
        <acronym>AGM8B</acronym>
        <description>A form of agammaglobulinemia, a primary immunodeficiency characterized by profoundly low or absent serum antibodies and low or absent circulating B-cells due to an early block of B-cell development. AGM8B is characterized by onset of recurrent infections in early childhood. AGM8B patients may show dysmorphic facies and subtle abnormalities of other immune cells, such as T cells.</description>
        <dbReference type="MIM" id="619824"/>
    </disease>
    <text>The disease is caused by variants affecting the gene represented in this entry.</text>
</comment>
<comment type="miscellaneous">
    <molecule>Isoform E47</molecule>
    <text evidence="27">The bHLH domain encompassing amino acids 546 to 599 is sufficient to mediate DNA-binding and homodimerization. Combined mutagenesis of Phe-566 and Leu-569 to Asp-566 and Glu-569, mutagenesis of Lys-585 to Ala-585 or combined mutagenesis of Ile-588 and Leu-589 to Asp-588 and Glu-589 prevents DNA-binding and homodimerization. Mutagenesis of Arg-548 to Lys-548, combined mutagenesis of Arg-547 and Arg-548 to Gly-547 and Gly-548, mutagenesis of Arg-556 to Lys-556, mutagenesis of Arg-558 to Lys-558, or combined mutagenesis of Arg-556 and Arg-558 to Gly-556 and Gly-558, alter DNA-binding but not dimerization.</text>
</comment>
<comment type="sequence caution" evidence="27">
    <conflict type="erroneous initiation">
        <sequence resource="EMBL-CDS" id="AAA52331"/>
    </conflict>
    <text>Truncated N-terminus.</text>
</comment>
<comment type="online information" name="Atlas of Genetics and Cytogenetics in Oncology and Haematology">
    <link uri="https://atlasgeneticsoncology.org/gene/50/E2A"/>
</comment>
<feature type="chain" id="PRO_0000127466" description="Transcription factor E2-alpha">
    <location>
        <begin position="1"/>
        <end position="654"/>
    </location>
</feature>
<feature type="domain" description="bHLH" evidence="4">
    <location>
        <begin position="549"/>
        <end position="602"/>
    </location>
</feature>
<feature type="region of interest" description="Disordered" evidence="5">
    <location>
        <begin position="31"/>
        <end position="103"/>
    </location>
</feature>
<feature type="region of interest" description="Disordered" evidence="5">
    <location>
        <begin position="135"/>
        <end position="205"/>
    </location>
</feature>
<feature type="region of interest" description="Disordered" evidence="5">
    <location>
        <begin position="239"/>
        <end position="268"/>
    </location>
</feature>
<feature type="region of interest" description="Disordered" evidence="5">
    <location>
        <begin position="292"/>
        <end position="329"/>
    </location>
</feature>
<feature type="region of interest" description="Disordered" evidence="5">
    <location>
        <begin position="343"/>
        <end position="385"/>
    </location>
</feature>
<feature type="region of interest" description="Leucine-zipper">
    <location>
        <begin position="389"/>
        <end position="425"/>
    </location>
</feature>
<feature type="region of interest" description="Disordered" evidence="5">
    <location>
        <begin position="461"/>
        <end position="552"/>
    </location>
</feature>
<feature type="region of interest" description="Disordered" evidence="5">
    <location>
        <begin position="633"/>
        <end position="654"/>
    </location>
</feature>
<feature type="short sequence motif" description="9aaTAD">
    <location>
        <begin position="19"/>
        <end position="27"/>
    </location>
</feature>
<feature type="short sequence motif" description="Nuclear localization signal" evidence="3">
    <location>
        <begin position="170"/>
        <end position="176"/>
    </location>
</feature>
<feature type="compositionally biased region" description="Low complexity" evidence="5">
    <location>
        <begin position="55"/>
        <end position="68"/>
    </location>
</feature>
<feature type="compositionally biased region" description="Polar residues" evidence="5">
    <location>
        <begin position="69"/>
        <end position="79"/>
    </location>
</feature>
<feature type="compositionally biased region" description="Low complexity" evidence="5">
    <location>
        <begin position="84"/>
        <end position="94"/>
    </location>
</feature>
<feature type="compositionally biased region" description="Low complexity" evidence="5">
    <location>
        <begin position="147"/>
        <end position="156"/>
    </location>
</feature>
<feature type="compositionally biased region" description="Low complexity" evidence="5">
    <location>
        <begin position="256"/>
        <end position="268"/>
    </location>
</feature>
<feature type="compositionally biased region" description="Low complexity" evidence="5">
    <location>
        <begin position="343"/>
        <end position="354"/>
    </location>
</feature>
<feature type="compositionally biased region" description="Basic and acidic residues" evidence="5">
    <location>
        <begin position="512"/>
        <end position="523"/>
    </location>
</feature>
<feature type="compositionally biased region" description="Basic and acidic residues" evidence="5">
    <location>
        <begin position="542"/>
        <end position="552"/>
    </location>
</feature>
<feature type="site" description="Breakpoint for translocation to form TCF3-PBX1 oncogene">
    <location>
        <begin position="483"/>
        <end position="484"/>
    </location>
</feature>
<feature type="modified residue" description="Phosphoserine" evidence="30">
    <location>
        <position position="134"/>
    </location>
</feature>
<feature type="modified residue" description="Phosphoserine" evidence="29">
    <location>
        <position position="139"/>
    </location>
</feature>
<feature type="modified residue" description="Phosphothreonine" evidence="2">
    <location>
        <position position="355"/>
    </location>
</feature>
<feature type="modified residue" description="Phosphoserine" evidence="29">
    <location>
        <position position="359"/>
    </location>
</feature>
<feature type="modified residue" description="Omega-N-methylarginine" evidence="2">
    <location>
        <position position="371"/>
    </location>
</feature>
<feature type="modified residue" description="Phosphoserine" evidence="31">
    <location>
        <position position="379"/>
    </location>
</feature>
<feature type="modified residue" description="Phosphoserine" evidence="31">
    <location>
        <position position="529"/>
    </location>
</feature>
<feature type="cross-link" description="Glycyl lysine isopeptide (Lys-Gly) (interchain with G-Cter in SUMO2)" evidence="32 33 34">
    <location>
        <position position="498"/>
    </location>
</feature>
<feature type="cross-link" description="Glycyl lysine isopeptide (Lys-Gly) (interchain with G-Cter in SUMO2)" evidence="34">
    <location>
        <position position="625"/>
    </location>
</feature>
<feature type="splice variant" id="VSP_057277" description="In isoform 3." evidence="23">
    <location>
        <begin position="49"/>
        <end position="99"/>
    </location>
</feature>
<feature type="splice variant" id="VSP_057278" description="In isoform 3." evidence="23">
    <original>T</original>
    <variation>TRCQPTPRHSPPSPHQDAHVHRPHAHRTHTGRPSAGPTLFPQPHCLPLAPSRRPPH</variation>
    <location>
        <position position="528"/>
    </location>
</feature>
<feature type="splice variant" id="VSP_002155" description="In isoform E47." evidence="23 24 25 26">
    <original>PDEDEDDLLPPEQKAEREKERRVANNARERLRVRDINEAFKELGRMCQLHLNSEKPQTKLLILHQAVSVILN</original>
    <variation>STDEVLSLEEKDLRDRERRMANNARERVRVRDINEAFRELGRMCQMHLKSDKAQTKLLILQQAVQVILG</variation>
    <location>
        <begin position="530"/>
        <end position="601"/>
    </location>
</feature>
<feature type="sequence variant" id="VAR_036396" description="In a colorectal cancer sample; somatic mutation; dbSNP:rs376780559." evidence="11">
    <original>A</original>
    <variation>V</variation>
    <location>
        <position position="8"/>
    </location>
</feature>
<feature type="sequence variant" id="VAR_049552" description="In dbSNP:rs35354874.">
    <original>L</original>
    <variation>P</variation>
    <location>
        <position position="120"/>
    </location>
</feature>
<feature type="sequence variant" id="VAR_049553" description="In dbSNP:rs11879402.">
    <original>T</original>
    <variation>A</variation>
    <location>
        <position position="198"/>
    </location>
</feature>
<feature type="sequence variant" id="VAR_087244" description="In AGM8B; decreased protein abundance." evidence="19">
    <location>
        <begin position="270"/>
        <end position="654"/>
    </location>
</feature>
<feature type="sequence variant" id="VAR_049554" description="In dbSNP:rs1052692.">
    <original>G</original>
    <variation>S</variation>
    <location>
        <position position="431"/>
    </location>
</feature>
<feature type="sequence conflict" description="In Ref. 6; CAA36297." evidence="27" ref="6">
    <original>FDPSRTFSEGTHFTESHSSLSSSTFLGPGLG</original>
    <variation>GGGECLAWCGPSAVHRCADVGLGMVSARTAP</variation>
    <location>
        <begin position="69"/>
        <end position="99"/>
    </location>
</feature>
<feature type="sequence conflict" description="In Ref. 5; AAA56830." evidence="27" ref="5">
    <original>FYV</original>
    <variation>EFR</variation>
    <location>
        <begin position="214"/>
        <end position="216"/>
    </location>
</feature>
<feature type="sequence conflict" description="In Ref. 1; AAA36764." evidence="27" ref="1">
    <location>
        <position position="302"/>
    </location>
</feature>
<feature type="sequence conflict" description="In Ref. 5; AAA56830." evidence="27" ref="5">
    <location>
        <position position="390"/>
    </location>
</feature>
<feature type="helix" evidence="35">
    <location>
        <begin position="12"/>
        <end position="25"/>
    </location>
</feature>
<feature type="helix" evidence="36">
    <location>
        <begin position="563"/>
        <end position="580"/>
    </location>
</feature>
<feature type="helix" evidence="36">
    <location>
        <begin position="588"/>
        <end position="608"/>
    </location>
</feature>
<feature type="modified residue" description="Phosphothreonine" evidence="28">
    <location sequence="P15923-2">
        <position position="531"/>
    </location>
</feature>
<feature type="sequence variant" id="VAR_082832" description="In AGM8A; localizes normally to the nucleus; does not perform proper DNA binding; acts in a dominant-negative manner when coexpressed with wild-type; dbSNP:rs879255271." evidence="16">
    <original>E</original>
    <variation>K</variation>
    <location sequence="P15923-2">
        <position position="555"/>
    </location>
</feature>
<evidence type="ECO:0000250" key="1"/>
<evidence type="ECO:0000250" key="2">
    <source>
        <dbReference type="UniProtKB" id="P15806"/>
    </source>
</evidence>
<evidence type="ECO:0000255" key="3"/>
<evidence type="ECO:0000255" key="4">
    <source>
        <dbReference type="PROSITE-ProRule" id="PRU00981"/>
    </source>
</evidence>
<evidence type="ECO:0000256" key="5">
    <source>
        <dbReference type="SAM" id="MobiDB-lite"/>
    </source>
</evidence>
<evidence type="ECO:0000269" key="6">
    <source>
    </source>
</evidence>
<evidence type="ECO:0000269" key="7">
    <source>
    </source>
</evidence>
<evidence type="ECO:0000269" key="8">
    <source>
    </source>
</evidence>
<evidence type="ECO:0000269" key="9">
    <source>
    </source>
</evidence>
<evidence type="ECO:0000269" key="10">
    <source>
    </source>
</evidence>
<evidence type="ECO:0000269" key="11">
    <source>
    </source>
</evidence>
<evidence type="ECO:0000269" key="12">
    <source>
    </source>
</evidence>
<evidence type="ECO:0000269" key="13">
    <source>
    </source>
</evidence>
<evidence type="ECO:0000269" key="14">
    <source>
    </source>
</evidence>
<evidence type="ECO:0000269" key="15">
    <source>
    </source>
</evidence>
<evidence type="ECO:0000269" key="16">
    <source>
    </source>
</evidence>
<evidence type="ECO:0000269" key="17">
    <source>
    </source>
</evidence>
<evidence type="ECO:0000269" key="18">
    <source>
    </source>
</evidence>
<evidence type="ECO:0000269" key="19">
    <source>
    </source>
</evidence>
<evidence type="ECO:0000269" key="20">
    <source>
    </source>
</evidence>
<evidence type="ECO:0000269" key="21">
    <source>
    </source>
</evidence>
<evidence type="ECO:0000269" key="22">
    <source>
    </source>
</evidence>
<evidence type="ECO:0000303" key="23">
    <source>
    </source>
</evidence>
<evidence type="ECO:0000303" key="24">
    <source>
    </source>
</evidence>
<evidence type="ECO:0000303" key="25">
    <source>
    </source>
</evidence>
<evidence type="ECO:0000303" key="26">
    <source>
    </source>
</evidence>
<evidence type="ECO:0000305" key="27"/>
<evidence type="ECO:0007744" key="28">
    <source>
    </source>
</evidence>
<evidence type="ECO:0007744" key="29">
    <source>
    </source>
</evidence>
<evidence type="ECO:0007744" key="30">
    <source>
    </source>
</evidence>
<evidence type="ECO:0007744" key="31">
    <source>
    </source>
</evidence>
<evidence type="ECO:0007744" key="32">
    <source>
    </source>
</evidence>
<evidence type="ECO:0007744" key="33">
    <source>
    </source>
</evidence>
<evidence type="ECO:0007744" key="34">
    <source>
    </source>
</evidence>
<evidence type="ECO:0007829" key="35">
    <source>
        <dbReference type="PDB" id="2MH0"/>
    </source>
</evidence>
<evidence type="ECO:0007829" key="36">
    <source>
        <dbReference type="PDB" id="3U5V"/>
    </source>
</evidence>
<name>TFE2_HUMAN</name>
<protein>
    <recommendedName>
        <fullName>Transcription factor E2-alpha</fullName>
    </recommendedName>
    <alternativeName>
        <fullName>Class B basic helix-loop-helix protein 21</fullName>
        <shortName>bHLHb21</shortName>
    </alternativeName>
    <alternativeName>
        <fullName>Immunoglobulin enhancer-binding factor E12/E47</fullName>
    </alternativeName>
    <alternativeName>
        <fullName>Immunoglobulin transcription factor 1</fullName>
    </alternativeName>
    <alternativeName>
        <fullName>Kappa-E2-binding factor</fullName>
    </alternativeName>
    <alternativeName>
        <fullName>Transcription factor 3</fullName>
        <shortName>TCF-3</shortName>
    </alternativeName>
    <alternativeName>
        <fullName>Transcription factor ITF-1</fullName>
    </alternativeName>
</protein>
<keyword id="KW-0002">3D-structure</keyword>
<keyword id="KW-0025">Alternative splicing</keyword>
<keyword id="KW-0160">Chromosomal rearrangement</keyword>
<keyword id="KW-0221">Differentiation</keyword>
<keyword id="KW-0225">Disease variant</keyword>
<keyword id="KW-0238">DNA-binding</keyword>
<keyword id="KW-1017">Isopeptide bond</keyword>
<keyword id="KW-0488">Methylation</keyword>
<keyword id="KW-0524">Neurogenesis</keyword>
<keyword id="KW-0539">Nucleus</keyword>
<keyword id="KW-0597">Phosphoprotein</keyword>
<keyword id="KW-1267">Proteomics identification</keyword>
<keyword id="KW-0656">Proto-oncogene</keyword>
<keyword id="KW-1185">Reference proteome</keyword>
<keyword id="KW-0804">Transcription</keyword>
<keyword id="KW-0805">Transcription regulation</keyword>
<keyword id="KW-0832">Ubl conjugation</keyword>
<reference key="1">
    <citation type="journal article" date="1990" name="Cell">
        <title>A new homeobox gene contributes the DNA binding domain of the t(1;19) translocation protein in pre-B ALL.</title>
        <authorList>
            <person name="Kamps M.P."/>
            <person name="Murre C."/>
            <person name="Sun X.-H."/>
            <person name="Baltimore D."/>
        </authorList>
    </citation>
    <scope>NUCLEOTIDE SEQUENCE [MRNA] (ISOFORM E12)</scope>
    <scope>CHROMOSOMAL TRANSLOCATION WITH PBX1</scope>
</reference>
<reference key="2">
    <citation type="journal article" date="1990" name="Cell">
        <title>Chromosomal translocation t(1;19) results in synthesis of a homeobox fusion mRNA that codes for a potential chimeric transcription factor.</title>
        <authorList>
            <person name="Nourse J."/>
            <person name="Mellentin J.D."/>
            <person name="Galili N."/>
            <person name="Wilkinson J."/>
            <person name="Stanbridge E."/>
            <person name="Smith S.D."/>
            <person name="Cleary M.L."/>
        </authorList>
    </citation>
    <scope>NUCLEOTIDE SEQUENCE [MRNA] (ISOFORM E12)</scope>
</reference>
<reference key="3">
    <citation type="journal article" date="2004" name="Nature">
        <title>The DNA sequence and biology of human chromosome 19.</title>
        <authorList>
            <person name="Grimwood J."/>
            <person name="Gordon L.A."/>
            <person name="Olsen A.S."/>
            <person name="Terry A."/>
            <person name="Schmutz J."/>
            <person name="Lamerdin J.E."/>
            <person name="Hellsten U."/>
            <person name="Goodstein D."/>
            <person name="Couronne O."/>
            <person name="Tran-Gyamfi M."/>
            <person name="Aerts A."/>
            <person name="Altherr M."/>
            <person name="Ashworth L."/>
            <person name="Bajorek E."/>
            <person name="Black S."/>
            <person name="Branscomb E."/>
            <person name="Caenepeel S."/>
            <person name="Carrano A.V."/>
            <person name="Caoile C."/>
            <person name="Chan Y.M."/>
            <person name="Christensen M."/>
            <person name="Cleland C.A."/>
            <person name="Copeland A."/>
            <person name="Dalin E."/>
            <person name="Dehal P."/>
            <person name="Denys M."/>
            <person name="Detter J.C."/>
            <person name="Escobar J."/>
            <person name="Flowers D."/>
            <person name="Fotopulos D."/>
            <person name="Garcia C."/>
            <person name="Georgescu A.M."/>
            <person name="Glavina T."/>
            <person name="Gomez M."/>
            <person name="Gonzales E."/>
            <person name="Groza M."/>
            <person name="Hammon N."/>
            <person name="Hawkins T."/>
            <person name="Haydu L."/>
            <person name="Ho I."/>
            <person name="Huang W."/>
            <person name="Israni S."/>
            <person name="Jett J."/>
            <person name="Kadner K."/>
            <person name="Kimball H."/>
            <person name="Kobayashi A."/>
            <person name="Larionov V."/>
            <person name="Leem S.-H."/>
            <person name="Lopez F."/>
            <person name="Lou Y."/>
            <person name="Lowry S."/>
            <person name="Malfatti S."/>
            <person name="Martinez D."/>
            <person name="McCready P.M."/>
            <person name="Medina C."/>
            <person name="Morgan J."/>
            <person name="Nelson K."/>
            <person name="Nolan M."/>
            <person name="Ovcharenko I."/>
            <person name="Pitluck S."/>
            <person name="Pollard M."/>
            <person name="Popkie A.P."/>
            <person name="Predki P."/>
            <person name="Quan G."/>
            <person name="Ramirez L."/>
            <person name="Rash S."/>
            <person name="Retterer J."/>
            <person name="Rodriguez A."/>
            <person name="Rogers S."/>
            <person name="Salamov A."/>
            <person name="Salazar A."/>
            <person name="She X."/>
            <person name="Smith D."/>
            <person name="Slezak T."/>
            <person name="Solovyev V."/>
            <person name="Thayer N."/>
            <person name="Tice H."/>
            <person name="Tsai M."/>
            <person name="Ustaszewska A."/>
            <person name="Vo N."/>
            <person name="Wagner M."/>
            <person name="Wheeler J."/>
            <person name="Wu K."/>
            <person name="Xie G."/>
            <person name="Yang J."/>
            <person name="Dubchak I."/>
            <person name="Furey T.S."/>
            <person name="DeJong P."/>
            <person name="Dickson M."/>
            <person name="Gordon D."/>
            <person name="Eichler E.E."/>
            <person name="Pennacchio L.A."/>
            <person name="Richardson P."/>
            <person name="Stubbs L."/>
            <person name="Rokhsar D.S."/>
            <person name="Myers R.M."/>
            <person name="Rubin E.M."/>
            <person name="Lucas S.M."/>
        </authorList>
    </citation>
    <scope>NUCLEOTIDE SEQUENCE [LARGE SCALE GENOMIC DNA]</scope>
</reference>
<reference key="4">
    <citation type="journal article" date="2004" name="Genome Res.">
        <title>The status, quality, and expansion of the NIH full-length cDNA project: the Mammalian Gene Collection (MGC).</title>
        <authorList>
            <consortium name="The MGC Project Team"/>
        </authorList>
    </citation>
    <scope>NUCLEOTIDE SEQUENCE [LARGE SCALE MRNA] (ISOFORMS E47 AND 3)</scope>
</reference>
<reference key="5">
    <citation type="journal article" date="1989" name="Cell">
        <title>A new DNA binding and dimerization motif in immunoglobulin enhancer binding, daughterless, MyoD, and myc proteins.</title>
        <authorList>
            <person name="Murre C."/>
            <person name="McCaw P.S."/>
            <person name="Baltimore D."/>
        </authorList>
    </citation>
    <scope>NUCLEOTIDE SEQUENCE [MRNA] OF 214-654 (ISOFORMS E12 AND E47)</scope>
    <scope>FUNCTION</scope>
    <scope>DOMAIN BHLH</scope>
    <source>
        <tissue>Lymphoma</tissue>
    </source>
</reference>
<reference key="6">
    <citation type="journal article" date="1990" name="Nucleic Acids Res.">
        <title>Sequence of the cDNA encoding ITF-1, a positive-acting transcription factor.</title>
        <authorList>
            <person name="Henthorn P."/>
            <person name="McCarrick-Walmsley R."/>
            <person name="Kadesch T."/>
        </authorList>
    </citation>
    <scope>NUCLEOTIDE SEQUENCE [MRNA] OF 69-654 (ISOFORM E47)</scope>
</reference>
<reference key="7">
    <citation type="journal article" date="1991" name="DNA Seq.">
        <title>Sequence of a HeLa cDNA provides the DNA binding domain and carboxy terminus of HE47: a human helix-loop-helix protein related to the enhancer binding factor E47.</title>
        <authorList>
            <person name="Zhang Y."/>
            <person name="Bina M."/>
        </authorList>
    </citation>
    <scope>NUCLEOTIDE SEQUENCE [MRNA] OF 511-654 (ISOFORM E47)</scope>
</reference>
<reference key="8">
    <citation type="journal article" date="1990" name="Science">
        <title>Two distinct transcription factors that bind the immunoglobulin enhancer microE5/kappa 2 motif.</title>
        <authorList>
            <person name="Henthorn P."/>
            <person name="Kiledjian M."/>
            <person name="Kadesch T."/>
        </authorList>
    </citation>
    <scope>DISCUSSION OF SEQUENCE</scope>
</reference>
<reference key="9">
    <citation type="journal article" date="1990" name="Proc. Natl. Acad. Sci. U.S.A.">
        <title>Mutations that disrupt DNA binding and dimer formation in the E47 helix-loop-helix protein map to distinct domains.</title>
        <authorList>
            <person name="Voronova A."/>
            <person name="Baltimore D."/>
        </authorList>
    </citation>
    <scope>MUTAGENESIS</scope>
    <scope>DNA-BINDING</scope>
    <scope>HOMODIMERIZATION</scope>
</reference>
<reference key="10">
    <citation type="journal article" date="1991" name="Blood">
        <title>The t(1;19)(q23;p13) results in consistent fusion of E2A and PBX1 coding sequences in acute lymphoblastic leukemias.</title>
        <authorList>
            <person name="Hunger S.P."/>
            <person name="Galili N."/>
            <person name="Carroll A.J."/>
            <person name="Crist W.M."/>
            <person name="Link M.P."/>
            <person name="Cleary M.L."/>
        </authorList>
    </citation>
    <scope>CHROMOSOMAL TRANSLOCATION WITH PBX1</scope>
</reference>
<reference key="11">
    <citation type="journal article" date="1992" name="Science">
        <title>Fusion of the leucine zipper gene HLF to the E2A gene in human acute B-lineage leukemia.</title>
        <authorList>
            <person name="Inaba T."/>
            <person name="Roberts W.M."/>
            <person name="Shapiro L.H."/>
            <person name="Jolly K.W."/>
            <person name="Raimondi S.C."/>
            <person name="Smith S.D."/>
            <person name="Look A.T."/>
        </authorList>
    </citation>
    <scope>CHROMOSOMAL TRANSLOCATION WITH HLF</scope>
</reference>
<reference key="12">
    <citation type="journal article" date="1997" name="Gene">
        <title>The mUBC9 murine ubiquitin conjugating enzyme interacts with the E2A transcription factors.</title>
        <authorList>
            <person name="Loveys D.A."/>
            <person name="Streiff M.B."/>
            <person name="Schaefer T.S."/>
            <person name="Kato G.J."/>
        </authorList>
    </citation>
    <scope>INTERACTION WITH UBE2I</scope>
</reference>
<reference key="13">
    <citation type="journal article" date="1999" name="Leukemia">
        <title>Identification of a novel molecular partner of the E2A gene in childhood leukemia.</title>
        <authorList>
            <person name="Brambillasca F."/>
            <person name="Mosna G."/>
            <person name="Colombo M."/>
            <person name="Rivolta A."/>
            <person name="Caslini C."/>
            <person name="Minuzzo M."/>
            <person name="Giudici G."/>
            <person name="Mizzi L."/>
            <person name="Biondi A."/>
            <person name="Privitera E."/>
        </authorList>
    </citation>
    <scope>CHROMOSOMAL TRANSLOCATION WITH TFPT</scope>
</reference>
<reference key="14">
    <citation type="journal article" date="2004" name="Mol. Endocrinol.">
        <title>Orphan nuclear receptor small heterodimer partner, a novel corepressor for a basic helix-loop-helix transcription factor BETA2/neuroD.</title>
        <authorList>
            <person name="Kim J.Y."/>
            <person name="Chu K."/>
            <person name="Kim H.J."/>
            <person name="Seong H.A."/>
            <person name="Park K.C."/>
            <person name="Sanyal S."/>
            <person name="Takeda J."/>
            <person name="Ha H."/>
            <person name="Shong M."/>
            <person name="Tsai M.J."/>
            <person name="Choi H.S."/>
        </authorList>
    </citation>
    <scope>INTERACTION WITH NEUROD1 AND EP300</scope>
    <scope>HOMODIMERIZATION</scope>
    <scope>HETERODIMERIZATION</scope>
</reference>
<reference key="15">
    <citation type="journal article" date="2004" name="Mol. Hum. Reprod.">
        <title>Increased expression of the FIGLA transcription factor is associated with primordial follicle formation in the human fetal ovary.</title>
        <authorList>
            <person name="Bayne R.A.L."/>
            <person name="Martins da Silva S.J."/>
            <person name="Anderson R.A."/>
        </authorList>
    </citation>
    <scope>INTERACTION WITH FIGLA</scope>
</reference>
<reference key="16">
    <citation type="journal article" date="2006" name="Nat. Biotechnol.">
        <title>A probability-based approach for high-throughput protein phosphorylation analysis and site localization.</title>
        <authorList>
            <person name="Beausoleil S.A."/>
            <person name="Villen J."/>
            <person name="Gerber S.A."/>
            <person name="Rush J."/>
            <person name="Gygi S.P."/>
        </authorList>
    </citation>
    <scope>IDENTIFICATION BY MASS SPECTROMETRY [LARGE SCALE ANALYSIS]</scope>
    <source>
        <tissue>Cervix carcinoma</tissue>
    </source>
</reference>
<reference key="17">
    <citation type="journal article" date="2008" name="Proc. Natl. Acad. Sci. U.S.A.">
        <title>A quantitative atlas of mitotic phosphorylation.</title>
        <authorList>
            <person name="Dephoure N."/>
            <person name="Zhou C."/>
            <person name="Villen J."/>
            <person name="Beausoleil S.A."/>
            <person name="Bakalarski C.E."/>
            <person name="Elledge S.J."/>
            <person name="Gygi S.P."/>
        </authorList>
    </citation>
    <scope>PHOSPHORYLATION [LARGE SCALE ANALYSIS] AT THR-531 (ISOFORM E47)</scope>
    <scope>IDENTIFICATION BY MASS SPECTROMETRY [LARGE SCALE ANALYSIS]</scope>
    <source>
        <tissue>Cervix carcinoma</tissue>
    </source>
</reference>
<reference key="18">
    <citation type="journal article" date="2009" name="Sci. Signal.">
        <title>Quantitative phosphoproteomic analysis of T cell receptor signaling reveals system-wide modulation of protein-protein interactions.</title>
        <authorList>
            <person name="Mayya V."/>
            <person name="Lundgren D.H."/>
            <person name="Hwang S.-I."/>
            <person name="Rezaul K."/>
            <person name="Wu L."/>
            <person name="Eng J.K."/>
            <person name="Rodionov V."/>
            <person name="Han D.K."/>
        </authorList>
    </citation>
    <scope>PHOSPHORYLATION [LARGE SCALE ANALYSIS] AT SER-139 AND SER-359</scope>
    <scope>IDENTIFICATION BY MASS SPECTROMETRY [LARGE SCALE ANALYSIS]</scope>
    <source>
        <tissue>Leukemic T-cell</tissue>
    </source>
</reference>
<reference key="19">
    <citation type="journal article" date="2010" name="Sci. Signal.">
        <title>Quantitative phosphoproteomics reveals widespread full phosphorylation site occupancy during mitosis.</title>
        <authorList>
            <person name="Olsen J.V."/>
            <person name="Vermeulen M."/>
            <person name="Santamaria A."/>
            <person name="Kumar C."/>
            <person name="Miller M.L."/>
            <person name="Jensen L.J."/>
            <person name="Gnad F."/>
            <person name="Cox J."/>
            <person name="Jensen T.S."/>
            <person name="Nigg E.A."/>
            <person name="Brunak S."/>
            <person name="Mann M."/>
        </authorList>
    </citation>
    <scope>PHOSPHORYLATION [LARGE SCALE ANALYSIS] AT SER-134</scope>
    <scope>IDENTIFICATION BY MASS SPECTROMETRY [LARGE SCALE ANALYSIS]</scope>
    <source>
        <tissue>Cervix carcinoma</tissue>
    </source>
</reference>
<reference key="20">
    <citation type="journal article" date="2011" name="Cell Res.">
        <title>Notch-induced Asb2 expression promotes protein ubiquitination by forming non-canonical E3 ligase complexes.</title>
        <authorList>
            <person name="Nie L."/>
            <person name="Zhao Y."/>
            <person name="Wu W."/>
            <person name="Yang Y.Z."/>
            <person name="Wang H.C."/>
            <person name="Sun X.H."/>
        </authorList>
    </citation>
    <scope>INTERACTION WITH ASB2</scope>
    <scope>PROTEASOMAL DEGRADATION</scope>
</reference>
<reference key="21">
    <citation type="journal article" date="2011" name="Sci. Signal.">
        <title>System-wide temporal characterization of the proteome and phosphoproteome of human embryonic stem cell differentiation.</title>
        <authorList>
            <person name="Rigbolt K.T."/>
            <person name="Prokhorova T.A."/>
            <person name="Akimov V."/>
            <person name="Henningsen J."/>
            <person name="Johansen P.T."/>
            <person name="Kratchmarova I."/>
            <person name="Kassem M."/>
            <person name="Mann M."/>
            <person name="Olsen J.V."/>
            <person name="Blagoev B."/>
        </authorList>
    </citation>
    <scope>IDENTIFICATION BY MASS SPECTROMETRY [LARGE SCALE ANALYSIS]</scope>
</reference>
<reference key="22">
    <citation type="journal article" date="2013" name="J. Proteome Res.">
        <title>Toward a comprehensive characterization of a human cancer cell phosphoproteome.</title>
        <authorList>
            <person name="Zhou H."/>
            <person name="Di Palma S."/>
            <person name="Preisinger C."/>
            <person name="Peng M."/>
            <person name="Polat A.N."/>
            <person name="Heck A.J."/>
            <person name="Mohammed S."/>
        </authorList>
    </citation>
    <scope>PHOSPHORYLATION [LARGE SCALE ANALYSIS] AT SER-379 AND SER-529</scope>
    <scope>IDENTIFICATION BY MASS SPECTROMETRY [LARGE SCALE ANALYSIS]</scope>
    <source>
        <tissue>Cervix carcinoma</tissue>
        <tissue>Erythroleukemia</tissue>
    </source>
</reference>
<reference key="23">
    <citation type="journal article" date="2014" name="Am. J. Hum. Genet.">
        <title>Mutations affecting the BHLHA9 DNA-binding domain cause MSSD, mesoaxial synostotic syndactyly with phalangeal reduction, Malik-Percin type.</title>
        <authorList>
            <person name="Malik S."/>
            <person name="Percin F.E."/>
            <person name="Bornholdt D."/>
            <person name="Albrecht B."/>
            <person name="Percesepe A."/>
            <person name="Koch M.C."/>
            <person name="Landi A."/>
            <person name="Fritz B."/>
            <person name="Khan R."/>
            <person name="Mumtaz S."/>
            <person name="Akarsu N.A."/>
            <person name="Grzeschik K.H."/>
        </authorList>
    </citation>
    <scope>INTERACTION WITH BHLHA9</scope>
</reference>
<reference key="24">
    <citation type="journal article" date="2014" name="Nat. Struct. Mol. Biol.">
        <title>Uncovering global SUMOylation signaling networks in a site-specific manner.</title>
        <authorList>
            <person name="Hendriks I.A."/>
            <person name="D'Souza R.C."/>
            <person name="Yang B."/>
            <person name="Verlaan-de Vries M."/>
            <person name="Mann M."/>
            <person name="Vertegaal A.C."/>
        </authorList>
    </citation>
    <scope>SUMOYLATION [LARGE SCALE ANALYSIS] AT LYS-498</scope>
    <scope>IDENTIFICATION BY MASS SPECTROMETRY [LARGE SCALE ANALYSIS]</scope>
</reference>
<reference key="25">
    <citation type="journal article" date="2015" name="Mol. Cell. Proteomics">
        <title>System-wide analysis of SUMOylation dynamics in response to replication stress reveals novel small ubiquitin-like modified target proteins and acceptor lysines relevant for genome stability.</title>
        <authorList>
            <person name="Xiao Z."/>
            <person name="Chang J.G."/>
            <person name="Hendriks I.A."/>
            <person name="Sigurdsson J.O."/>
            <person name="Olsen J.V."/>
            <person name="Vertegaal A.C."/>
        </authorList>
    </citation>
    <scope>SUMOYLATION [LARGE SCALE ANALYSIS] AT LYS-498</scope>
    <scope>IDENTIFICATION BY MASS SPECTROMETRY [LARGE SCALE ANALYSIS]</scope>
</reference>
<reference key="26">
    <citation type="journal article" date="2017" name="Nat. Struct. Mol. Biol.">
        <title>Site-specific mapping of the human SUMO proteome reveals co-modification with phosphorylation.</title>
        <authorList>
            <person name="Hendriks I.A."/>
            <person name="Lyon D."/>
            <person name="Young C."/>
            <person name="Jensen L.J."/>
            <person name="Vertegaal A.C."/>
            <person name="Nielsen M.L."/>
        </authorList>
    </citation>
    <scope>SUMOYLATION [LARGE SCALE ANALYSIS] AT LYS-498 AND LYS-625</scope>
    <scope>IDENTIFICATION BY MASS SPECTROMETRY [LARGE SCALE ANALYSIS]</scope>
</reference>
<reference key="27">
    <citation type="journal article" date="2020" name="Hum. Mol. Genet.">
        <title>Atonal homolog 7 (ATOH7) loss-of-function mutations in predominant bilateral optic nerve hypoplasia.</title>
        <authorList>
            <person name="Atac D."/>
            <person name="Koller S."/>
            <person name="Hanson J.V.M."/>
            <person name="Feil S."/>
            <person name="Tiwari A."/>
            <person name="Bahr A."/>
            <person name="Baehr L."/>
            <person name="Magyar I."/>
            <person name="Kottke R."/>
            <person name="Gerth-Kahlert C."/>
            <person name="Berger W."/>
        </authorList>
    </citation>
    <scope>FUNCTION</scope>
    <scope>INTERACTION WITH ATOH7</scope>
    <scope>SUBCELLULAR LOCATION</scope>
</reference>
<reference key="28">
    <citation type="journal article" date="1993" name="Protein Eng.">
        <title>Proposed structure for the DNA-binding domain of the helix-loop-helix family of eukaryotic gene regulatory proteins.</title>
        <authorList>
            <person name="Gibson T.J."/>
            <person name="Thompson J.D."/>
            <person name="Abagyan R.A."/>
        </authorList>
    </citation>
    <scope>3D-STRUCTURE MODELING OF 549-610</scope>
</reference>
<reference key="29">
    <citation type="journal article" date="2006" name="Science">
        <title>The consensus coding sequences of human breast and colorectal cancers.</title>
        <authorList>
            <person name="Sjoeblom T."/>
            <person name="Jones S."/>
            <person name="Wood L.D."/>
            <person name="Parsons D.W."/>
            <person name="Lin J."/>
            <person name="Barber T.D."/>
            <person name="Mandelker D."/>
            <person name="Leary R.J."/>
            <person name="Ptak J."/>
            <person name="Silliman N."/>
            <person name="Szabo S."/>
            <person name="Buckhaults P."/>
            <person name="Farrell C."/>
            <person name="Meeh P."/>
            <person name="Markowitz S.D."/>
            <person name="Willis J."/>
            <person name="Dawson D."/>
            <person name="Willson J.K.V."/>
            <person name="Gazdar A.F."/>
            <person name="Hartigan J."/>
            <person name="Wu L."/>
            <person name="Liu C."/>
            <person name="Parmigiani G."/>
            <person name="Park B.H."/>
            <person name="Bachman K.E."/>
            <person name="Papadopoulos N."/>
            <person name="Vogelstein B."/>
            <person name="Kinzler K.W."/>
            <person name="Velculescu V.E."/>
        </authorList>
    </citation>
    <scope>VARIANT [LARGE SCALE ANALYSIS] VAL-8</scope>
</reference>
<reference key="30">
    <citation type="journal article" date="2007" name="Genomics">
        <title>Nine-amino-acid transactivation domain: establishment and prediction utilities.</title>
        <authorList>
            <person name="Piskacek S."/>
            <person name="Gregor M."/>
            <person name="Nemethova M."/>
            <person name="Grabner M."/>
            <person name="Kovarik P."/>
            <person name="Piskacek M."/>
        </authorList>
    </citation>
    <scope>DOMAIN</scope>
</reference>
<reference key="31">
    <citation type="journal article" date="2013" name="J. Clin. Invest.">
        <title>A recurrent dominant negative E47 mutation causes agammaglobulinemia and BCR(-) B cells.</title>
        <authorList>
            <person name="Boisson B."/>
            <person name="Wang Y.D."/>
            <person name="Bosompem A."/>
            <person name="Ma C.S."/>
            <person name="Lim A."/>
            <person name="Kochetkov T."/>
            <person name="Tangye S.G."/>
            <person name="Casanova J.L."/>
            <person name="Conley M.E."/>
        </authorList>
    </citation>
    <scope>INVOLVEMENT IN AGM8A</scope>
    <scope>VARIANT AGM8A LYS-555 (ISOFORM E47)</scope>
    <scope>CHARACTERIZATION OF VARIANT AGM8A (ISOFORM E47) LYS-555</scope>
</reference>
<reference key="32">
    <citation type="journal article" date="2017" name="J. Allergy Clin. Immunol.">
        <title>Homozygous transcription factor 3 gene (TCF3) mutation is associated with severe hypogammaglobulinemia and B-cell acute lymphoblastic leukemia.</title>
        <authorList>
            <person name="Ben-Ali M."/>
            <person name="Yang J."/>
            <person name="Chan K.W."/>
            <person name="Ben-Mustapha I."/>
            <person name="Mekki N."/>
            <person name="Benabdesselem C."/>
            <person name="Mellouli F."/>
            <person name="Bejaoui M."/>
            <person name="Yang W."/>
            <person name="Aissaoui L."/>
            <person name="Lau Y.L."/>
            <person name="Barbouche M.R."/>
        </authorList>
    </citation>
    <scope>INVOLVEMENT IN AGM8B</scope>
    <scope>VARIANT AGM8B 270-GLN--MET-654 DEL</scope>
    <scope>CHARACTERIZATION OF VARIANT AGM8B 270-GLN--MET-654 DEL</scope>
</reference>
<reference key="33">
    <citation type="journal article" date="2019" name="Clin. Immunol.">
        <title>Autosomal Recessive Agammaglobulinemia - first case with a novel TCF3 mutation from Pakistan.</title>
        <authorList>
            <person name="Qureshi S."/>
            <person name="Sheikh M.D.A."/>
            <person name="Qamar F.N."/>
        </authorList>
    </citation>
    <scope>INVOLVEMENT IN AGM8B</scope>
</reference>
<gene>
    <name type="primary">TCF3</name>
    <name type="synonym">BHLHB21</name>
    <name type="synonym">E2A</name>
    <name type="synonym">ITF1</name>
</gene>
<proteinExistence type="evidence at protein level"/>
<accession>P15923</accession>
<accession>P15883</accession>
<accession>Q14208</accession>
<accession>Q14635</accession>
<accession>Q14636</accession>
<accession>Q2TB39</accession>
<accession>Q2TB40</accession>
<accession>Q9UPI9</accession>
<organism>
    <name type="scientific">Homo sapiens</name>
    <name type="common">Human</name>
    <dbReference type="NCBI Taxonomy" id="9606"/>
    <lineage>
        <taxon>Eukaryota</taxon>
        <taxon>Metazoa</taxon>
        <taxon>Chordata</taxon>
        <taxon>Craniata</taxon>
        <taxon>Vertebrata</taxon>
        <taxon>Euteleostomi</taxon>
        <taxon>Mammalia</taxon>
        <taxon>Eutheria</taxon>
        <taxon>Euarchontoglires</taxon>
        <taxon>Primates</taxon>
        <taxon>Haplorrhini</taxon>
        <taxon>Catarrhini</taxon>
        <taxon>Hominidae</taxon>
        <taxon>Homo</taxon>
    </lineage>
</organism>
<sequence length="654" mass="67600">MNQPQRMAPVGTDKELSDLLDFSMMFPLPVTNGKGRPASLAGAQFGGSGLEDRPSSGSWGSGDQSSSSFDPSRTFSEGTHFTESHSSLSSSTFLGPGLGGKSGERGAYASFGRDAGVGGLTQAGFLSGELALNSPGPLSPSGMKGTSQYYPSYSGSSRRRAADGSLDTQPKKVRKVPPGLPSSVYPPSSGEDYGRDATAYPSAKTPSSTYPAPFYVADGSLHPSAELWSPPGQAGFGPMLGGGSSPLPLPPGSGPVGSSGSSSTFGGLHQHERMGYQLHGAEVNGGLPSASSFSSAPGATYGGVSSHTPPVSGADSLLGSRGTTAGSSGDALGKALASIYSPDHSSNNFSSSPSTPVGSPQGLAGTSQWPRAGAPGALSPSYDGGLHGLQSKIEDHLDEAIHVLRSHAVGTAGDMHTLLPGHGALASGFTGPMSLGGRHAGLVGGSHPEDGLAGSTSLMHNHAALPSQPGTLPDLSRPPDSYSGLGRAGATAAASEIKREEKEDEENTSAADHSEEEKKELKAPRARTSPDEDEDDLLPPEQKAEREKERRVANNARERLRVRDINEAFKELGRMCQLHLNSEKPQTKLLILHQAVSVILNLEQQVRERNLNPKAACLKRREEEKVSGVVGDPQMVLSAPHPGLSEAHNPAGHM</sequence>